<feature type="signal peptide" evidence="4">
    <location>
        <begin position="1"/>
        <end position="25"/>
    </location>
</feature>
<feature type="propeptide" id="PRO_0000006235" evidence="1">
    <location>
        <begin position="26"/>
        <end position="80"/>
    </location>
</feature>
<feature type="peptide" id="PRO_0000006236" description="Urocortin">
    <location>
        <begin position="81"/>
        <end position="120"/>
    </location>
</feature>
<feature type="modified residue" description="Valine amide" evidence="1">
    <location>
        <position position="120"/>
    </location>
</feature>
<comment type="function">
    <text evidence="2 3 6">Acts in vitro to stimulate the secretion of adrenocorticotropic hormone (ACTH) (By similarity). Binds with high affinity to CRF receptor types 1, 2-alpha, and 2-beta (By similarity). Plays a role in the establishment of normal hearing thresholds (PubMed:12091910). Reduces food intake and regulates ghrelin levels in gastric body and plasma (By similarity).</text>
</comment>
<comment type="subunit">
    <text evidence="1">Interacts with CRHR1 and CRHR2 (via their N-terminal extracellular domain).</text>
</comment>
<comment type="subcellular location">
    <subcellularLocation>
        <location>Secreted</location>
    </subcellularLocation>
</comment>
<comment type="tissue specificity">
    <text evidence="5 6">In the organ of Corti, detected in the inner hair cell region (at protein level) (PubMed:12091910). Expressed in skin (at protein level) (PubMed:10690896).</text>
</comment>
<comment type="developmental stage">
    <text evidence="5">In skin, levels decrease gradually from the telogen (resting) phase of the hair follicle with lowest levels observed in late anagen IV phase of active growth (at protein level).</text>
</comment>
<comment type="disruption phenotype">
    <text evidence="6">Increased anxiety-like behavior, reduced Crhr2 mRNA levels in the lateral septum, normal basal feeding behavior, and hearing impairment at the level of the inner ear with shorter outer hair cells, higher threshold for auditory stimuli and higher distortion product otoacoustic emissions.</text>
</comment>
<comment type="similarity">
    <text evidence="7">Belongs to the sauvagine/corticotropin-releasing factor/urotensin I family.</text>
</comment>
<keyword id="KW-0027">Amidation</keyword>
<keyword id="KW-0165">Cleavage on pair of basic residues</keyword>
<keyword id="KW-1009">Hearing</keyword>
<keyword id="KW-0372">Hormone</keyword>
<keyword id="KW-1185">Reference proteome</keyword>
<keyword id="KW-0964">Secreted</keyword>
<keyword id="KW-0732">Signal</keyword>
<accession>P81615</accession>
<accession>O88390</accession>
<accession>Q14A76</accession>
<sequence length="122" mass="13558">MIQRGRATLLVALLLLAQLRPESSQWSPAAAAATGVQDPNLRWSPGVRNQGGGVRALLLLLAERFPRRAGSEPAGERQRRDDPPLSIDLTFHLLRTLLELARTQSQRERAEQNRIIFDSVGK</sequence>
<evidence type="ECO:0000250" key="1"/>
<evidence type="ECO:0000250" key="2">
    <source>
        <dbReference type="UniProtKB" id="P55089"/>
    </source>
</evidence>
<evidence type="ECO:0000250" key="3">
    <source>
        <dbReference type="UniProtKB" id="P55090"/>
    </source>
</evidence>
<evidence type="ECO:0000255" key="4"/>
<evidence type="ECO:0000269" key="5">
    <source>
    </source>
</evidence>
<evidence type="ECO:0000269" key="6">
    <source>
    </source>
</evidence>
<evidence type="ECO:0000305" key="7"/>
<protein>
    <recommendedName>
        <fullName>Urocortin</fullName>
    </recommendedName>
</protein>
<gene>
    <name type="primary">Ucn</name>
</gene>
<reference key="1">
    <citation type="journal article" date="1998" name="Genomics">
        <title>The structures of the mouse and human urocortin genes (Ucn and UCN).</title>
        <authorList>
            <person name="Zhao L."/>
            <person name="Donaldson C.J."/>
            <person name="Smith G.W."/>
            <person name="Vale W.W."/>
        </authorList>
    </citation>
    <scope>NUCLEOTIDE SEQUENCE [GENOMIC DNA]</scope>
</reference>
<reference key="2">
    <citation type="submission" date="2005-07" db="EMBL/GenBank/DDBJ databases">
        <authorList>
            <person name="Mural R.J."/>
            <person name="Adams M.D."/>
            <person name="Myers E.W."/>
            <person name="Smith H.O."/>
            <person name="Venter J.C."/>
        </authorList>
    </citation>
    <scope>NUCLEOTIDE SEQUENCE [LARGE SCALE GENOMIC DNA]</scope>
</reference>
<reference key="3">
    <citation type="journal article" date="2004" name="Genome Res.">
        <title>The status, quality, and expansion of the NIH full-length cDNA project: the Mammalian Gene Collection (MGC).</title>
        <authorList>
            <consortium name="The MGC Project Team"/>
        </authorList>
    </citation>
    <scope>NUCLEOTIDE SEQUENCE [LARGE SCALE MRNA]</scope>
</reference>
<reference key="4">
    <citation type="journal article" date="2000" name="J. Clin. Endocrinol. Metab.">
        <title>The skin produces urocortin.</title>
        <authorList>
            <person name="Slominski A."/>
            <person name="Roloff B."/>
            <person name="Curry J."/>
            <person name="Dahiya M."/>
            <person name="Szczesniewski A."/>
            <person name="Wortsman J."/>
        </authorList>
    </citation>
    <scope>TISSUE SPECIFICITY</scope>
    <scope>DEVELOPMENTAL STAGE</scope>
</reference>
<reference key="5">
    <citation type="journal article" date="2002" name="Nat. Genet.">
        <title>Urocortin-deficient mice show hearing impairment and increased anxiety-like behavior.</title>
        <authorList>
            <person name="Vetter D.E."/>
            <person name="Li C."/>
            <person name="Zhao L."/>
            <person name="Contarino A."/>
            <person name="Liberman M.C."/>
            <person name="Smith G.W."/>
            <person name="Marchuk Y."/>
            <person name="Koob G.F."/>
            <person name="Heinemann S.F."/>
            <person name="Vale W."/>
            <person name="Lee K.F."/>
        </authorList>
    </citation>
    <scope>TISSUE SPECIFICITY</scope>
    <scope>FUNCTION</scope>
    <scope>DISRUPTION PHENOTYPE</scope>
</reference>
<organism>
    <name type="scientific">Mus musculus</name>
    <name type="common">Mouse</name>
    <dbReference type="NCBI Taxonomy" id="10090"/>
    <lineage>
        <taxon>Eukaryota</taxon>
        <taxon>Metazoa</taxon>
        <taxon>Chordata</taxon>
        <taxon>Craniata</taxon>
        <taxon>Vertebrata</taxon>
        <taxon>Euteleostomi</taxon>
        <taxon>Mammalia</taxon>
        <taxon>Eutheria</taxon>
        <taxon>Euarchontoglires</taxon>
        <taxon>Glires</taxon>
        <taxon>Rodentia</taxon>
        <taxon>Myomorpha</taxon>
        <taxon>Muroidea</taxon>
        <taxon>Muridae</taxon>
        <taxon>Murinae</taxon>
        <taxon>Mus</taxon>
        <taxon>Mus</taxon>
    </lineage>
</organism>
<proteinExistence type="evidence at protein level"/>
<dbReference type="EMBL" id="AF038632">
    <property type="protein sequence ID" value="AAC24202.1"/>
    <property type="molecule type" value="Genomic_DNA"/>
</dbReference>
<dbReference type="EMBL" id="CH466524">
    <property type="protein sequence ID" value="EDL37339.1"/>
    <property type="molecule type" value="Genomic_DNA"/>
</dbReference>
<dbReference type="EMBL" id="BC116948">
    <property type="protein sequence ID" value="AAI16949.1"/>
    <property type="molecule type" value="mRNA"/>
</dbReference>
<dbReference type="EMBL" id="BC116950">
    <property type="protein sequence ID" value="AAI16951.1"/>
    <property type="molecule type" value="mRNA"/>
</dbReference>
<dbReference type="EMBL" id="BC144891">
    <property type="protein sequence ID" value="AAI44892.1"/>
    <property type="molecule type" value="mRNA"/>
</dbReference>
<dbReference type="CCDS" id="CCDS19174.1"/>
<dbReference type="RefSeq" id="NP_001332939.1">
    <property type="nucleotide sequence ID" value="NM_001346010.1"/>
</dbReference>
<dbReference type="RefSeq" id="NP_067265.1">
    <property type="nucleotide sequence ID" value="NM_021290.2"/>
</dbReference>
<dbReference type="SMR" id="P81615"/>
<dbReference type="FunCoup" id="P81615">
    <property type="interactions" value="382"/>
</dbReference>
<dbReference type="STRING" id="10090.ENSMUSP00000035321"/>
<dbReference type="PaxDb" id="10090-ENSMUSP00000035321"/>
<dbReference type="ProteomicsDB" id="297863"/>
<dbReference type="Antibodypedia" id="4400">
    <property type="antibodies" value="210 antibodies from 32 providers"/>
</dbReference>
<dbReference type="Ensembl" id="ENSMUST00000043475.7">
    <property type="protein sequence ID" value="ENSMUSP00000035321.3"/>
    <property type="gene ID" value="ENSMUSG00000038676.7"/>
</dbReference>
<dbReference type="Ensembl" id="ENSMUST00000201184.2">
    <property type="protein sequence ID" value="ENSMUSP00000144390.2"/>
    <property type="gene ID" value="ENSMUSG00000038676.7"/>
</dbReference>
<dbReference type="GeneID" id="22226"/>
<dbReference type="KEGG" id="mmu:22226"/>
<dbReference type="UCSC" id="uc008wxe.1">
    <property type="organism name" value="mouse"/>
</dbReference>
<dbReference type="AGR" id="MGI:1276123"/>
<dbReference type="CTD" id="7349"/>
<dbReference type="MGI" id="MGI:1276123">
    <property type="gene designation" value="Ucn"/>
</dbReference>
<dbReference type="VEuPathDB" id="HostDB:ENSMUSG00000038676"/>
<dbReference type="eggNOG" id="ENOG502S63E">
    <property type="taxonomic scope" value="Eukaryota"/>
</dbReference>
<dbReference type="GeneTree" id="ENSGT00940000154473"/>
<dbReference type="HOGENOM" id="CLU_138901_0_0_1"/>
<dbReference type="InParanoid" id="P81615"/>
<dbReference type="OMA" id="QNRIVFD"/>
<dbReference type="OrthoDB" id="9837731at2759"/>
<dbReference type="PhylomeDB" id="P81615"/>
<dbReference type="TreeFam" id="TF332956"/>
<dbReference type="Reactome" id="R-MMU-373080">
    <property type="pathway name" value="Class B/2 (Secretin family receptors)"/>
</dbReference>
<dbReference type="BioGRID-ORCS" id="22226">
    <property type="hits" value="1 hit in 79 CRISPR screens"/>
</dbReference>
<dbReference type="PRO" id="PR:P81615"/>
<dbReference type="Proteomes" id="UP000000589">
    <property type="component" value="Chromosome 5"/>
</dbReference>
<dbReference type="RNAct" id="P81615">
    <property type="molecule type" value="protein"/>
</dbReference>
<dbReference type="Bgee" id="ENSMUSG00000038676">
    <property type="expression patterns" value="Expressed in hindlimb stylopod muscle and 17 other cell types or tissues"/>
</dbReference>
<dbReference type="GO" id="GO:0043679">
    <property type="term" value="C:axon terminus"/>
    <property type="evidence" value="ECO:0007669"/>
    <property type="project" value="Ensembl"/>
</dbReference>
<dbReference type="GO" id="GO:0030425">
    <property type="term" value="C:dendrite"/>
    <property type="evidence" value="ECO:0007669"/>
    <property type="project" value="Ensembl"/>
</dbReference>
<dbReference type="GO" id="GO:0005576">
    <property type="term" value="C:extracellular region"/>
    <property type="evidence" value="ECO:0007669"/>
    <property type="project" value="UniProtKB-SubCell"/>
</dbReference>
<dbReference type="GO" id="GO:0043204">
    <property type="term" value="C:perikaryon"/>
    <property type="evidence" value="ECO:0007669"/>
    <property type="project" value="Ensembl"/>
</dbReference>
<dbReference type="GO" id="GO:0043196">
    <property type="term" value="C:varicosity"/>
    <property type="evidence" value="ECO:0007669"/>
    <property type="project" value="Ensembl"/>
</dbReference>
<dbReference type="GO" id="GO:0051430">
    <property type="term" value="F:corticotropin-releasing hormone receptor 1 binding"/>
    <property type="evidence" value="ECO:0007669"/>
    <property type="project" value="Ensembl"/>
</dbReference>
<dbReference type="GO" id="GO:0051431">
    <property type="term" value="F:corticotropin-releasing hormone receptor 2 binding"/>
    <property type="evidence" value="ECO:0007669"/>
    <property type="project" value="Ensembl"/>
</dbReference>
<dbReference type="GO" id="GO:0046811">
    <property type="term" value="F:histone deacetylase inhibitor activity"/>
    <property type="evidence" value="ECO:0007669"/>
    <property type="project" value="Ensembl"/>
</dbReference>
<dbReference type="GO" id="GO:0005179">
    <property type="term" value="F:hormone activity"/>
    <property type="evidence" value="ECO:0007669"/>
    <property type="project" value="UniProtKB-KW"/>
</dbReference>
<dbReference type="GO" id="GO:0009060">
    <property type="term" value="P:aerobic respiration"/>
    <property type="evidence" value="ECO:0007669"/>
    <property type="project" value="Ensembl"/>
</dbReference>
<dbReference type="GO" id="GO:0008306">
    <property type="term" value="P:associative learning"/>
    <property type="evidence" value="ECO:0007669"/>
    <property type="project" value="Ensembl"/>
</dbReference>
<dbReference type="GO" id="GO:0042756">
    <property type="term" value="P:drinking behavior"/>
    <property type="evidence" value="ECO:0007669"/>
    <property type="project" value="Ensembl"/>
</dbReference>
<dbReference type="GO" id="GO:0007565">
    <property type="term" value="P:female pregnancy"/>
    <property type="evidence" value="ECO:0007669"/>
    <property type="project" value="Ensembl"/>
</dbReference>
<dbReference type="GO" id="GO:0032099">
    <property type="term" value="P:negative regulation of appetite"/>
    <property type="evidence" value="ECO:0007669"/>
    <property type="project" value="Ensembl"/>
</dbReference>
<dbReference type="GO" id="GO:0045776">
    <property type="term" value="P:negative regulation of blood pressure"/>
    <property type="evidence" value="ECO:0007669"/>
    <property type="project" value="Ensembl"/>
</dbReference>
<dbReference type="GO" id="GO:0045792">
    <property type="term" value="P:negative regulation of cell size"/>
    <property type="evidence" value="ECO:0007669"/>
    <property type="project" value="Ensembl"/>
</dbReference>
<dbReference type="GO" id="GO:2000252">
    <property type="term" value="P:negative regulation of feeding behavior"/>
    <property type="evidence" value="ECO:0007669"/>
    <property type="project" value="Ensembl"/>
</dbReference>
<dbReference type="GO" id="GO:0010629">
    <property type="term" value="P:negative regulation of gene expression"/>
    <property type="evidence" value="ECO:0007669"/>
    <property type="project" value="Ensembl"/>
</dbReference>
<dbReference type="GO" id="GO:0046888">
    <property type="term" value="P:negative regulation of hormone secretion"/>
    <property type="evidence" value="ECO:0007669"/>
    <property type="project" value="Ensembl"/>
</dbReference>
<dbReference type="GO" id="GO:0043524">
    <property type="term" value="P:negative regulation of neuron apoptotic process"/>
    <property type="evidence" value="ECO:0007669"/>
    <property type="project" value="Ensembl"/>
</dbReference>
<dbReference type="GO" id="GO:0031175">
    <property type="term" value="P:neuron projection development"/>
    <property type="evidence" value="ECO:0007669"/>
    <property type="project" value="Ensembl"/>
</dbReference>
<dbReference type="GO" id="GO:0007218">
    <property type="term" value="P:neuropeptide signaling pathway"/>
    <property type="evidence" value="ECO:0007669"/>
    <property type="project" value="Ensembl"/>
</dbReference>
<dbReference type="GO" id="GO:2000987">
    <property type="term" value="P:positive regulation of behavioral fear response"/>
    <property type="evidence" value="ECO:0007669"/>
    <property type="project" value="Ensembl"/>
</dbReference>
<dbReference type="GO" id="GO:0090280">
    <property type="term" value="P:positive regulation of calcium ion import"/>
    <property type="evidence" value="ECO:0007669"/>
    <property type="project" value="Ensembl"/>
</dbReference>
<dbReference type="GO" id="GO:0141163">
    <property type="term" value="P:positive regulation of cAMP/PKA signal transduction"/>
    <property type="evidence" value="ECO:0007669"/>
    <property type="project" value="Ensembl"/>
</dbReference>
<dbReference type="GO" id="GO:0060452">
    <property type="term" value="P:positive regulation of cardiac muscle contraction"/>
    <property type="evidence" value="ECO:0007669"/>
    <property type="project" value="Ensembl"/>
</dbReference>
<dbReference type="GO" id="GO:0030307">
    <property type="term" value="P:positive regulation of cell growth"/>
    <property type="evidence" value="ECO:0007669"/>
    <property type="project" value="Ensembl"/>
</dbReference>
<dbReference type="GO" id="GO:0032967">
    <property type="term" value="P:positive regulation of collagen biosynthetic process"/>
    <property type="evidence" value="ECO:0007669"/>
    <property type="project" value="Ensembl"/>
</dbReference>
<dbReference type="GO" id="GO:0051461">
    <property type="term" value="P:positive regulation of corticotropin secretion"/>
    <property type="evidence" value="ECO:0007669"/>
    <property type="project" value="Ensembl"/>
</dbReference>
<dbReference type="GO" id="GO:0045740">
    <property type="term" value="P:positive regulation of DNA replication"/>
    <property type="evidence" value="ECO:0007669"/>
    <property type="project" value="Ensembl"/>
</dbReference>
<dbReference type="GO" id="GO:0032755">
    <property type="term" value="P:positive regulation of interleukin-6 production"/>
    <property type="evidence" value="ECO:0007669"/>
    <property type="project" value="Ensembl"/>
</dbReference>
<dbReference type="GO" id="GO:0045944">
    <property type="term" value="P:positive regulation of transcription by RNA polymerase II"/>
    <property type="evidence" value="ECO:0000315"/>
    <property type="project" value="UniProtKB"/>
</dbReference>
<dbReference type="GO" id="GO:0045727">
    <property type="term" value="P:positive regulation of translation"/>
    <property type="evidence" value="ECO:0007669"/>
    <property type="project" value="Ensembl"/>
</dbReference>
<dbReference type="GO" id="GO:0043117">
    <property type="term" value="P:positive regulation of vascular permeability"/>
    <property type="evidence" value="ECO:0007669"/>
    <property type="project" value="Ensembl"/>
</dbReference>
<dbReference type="GO" id="GO:0051966">
    <property type="term" value="P:regulation of synaptic transmission, glutamatergic"/>
    <property type="evidence" value="ECO:0007669"/>
    <property type="project" value="Ensembl"/>
</dbReference>
<dbReference type="GO" id="GO:0010996">
    <property type="term" value="P:response to auditory stimulus"/>
    <property type="evidence" value="ECO:0000315"/>
    <property type="project" value="UniProtKB"/>
</dbReference>
<dbReference type="GO" id="GO:0032355">
    <property type="term" value="P:response to estradiol"/>
    <property type="evidence" value="ECO:0007669"/>
    <property type="project" value="Ensembl"/>
</dbReference>
<dbReference type="GO" id="GO:0051384">
    <property type="term" value="P:response to glucocorticoid"/>
    <property type="evidence" value="ECO:0007669"/>
    <property type="project" value="Ensembl"/>
</dbReference>
<dbReference type="GO" id="GO:0006979">
    <property type="term" value="P:response to oxidative stress"/>
    <property type="evidence" value="ECO:0007669"/>
    <property type="project" value="Ensembl"/>
</dbReference>
<dbReference type="GO" id="GO:0048265">
    <property type="term" value="P:response to pain"/>
    <property type="evidence" value="ECO:0007669"/>
    <property type="project" value="Ensembl"/>
</dbReference>
<dbReference type="GO" id="GO:0007605">
    <property type="term" value="P:sensory perception of sound"/>
    <property type="evidence" value="ECO:0007669"/>
    <property type="project" value="UniProtKB-KW"/>
</dbReference>
<dbReference type="GO" id="GO:0035176">
    <property type="term" value="P:social behavior"/>
    <property type="evidence" value="ECO:0007669"/>
    <property type="project" value="Ensembl"/>
</dbReference>
<dbReference type="GO" id="GO:0001964">
    <property type="term" value="P:startle response"/>
    <property type="evidence" value="ECO:0000315"/>
    <property type="project" value="UniProtKB"/>
</dbReference>
<dbReference type="GO" id="GO:0042311">
    <property type="term" value="P:vasodilation"/>
    <property type="evidence" value="ECO:0007669"/>
    <property type="project" value="Ensembl"/>
</dbReference>
<dbReference type="Gene3D" id="6.10.250.1920">
    <property type="match status" value="1"/>
</dbReference>
<dbReference type="InterPro" id="IPR018446">
    <property type="entry name" value="Corticotropin-releasing_fac_CS"/>
</dbReference>
<dbReference type="InterPro" id="IPR000187">
    <property type="entry name" value="CRF"/>
</dbReference>
<dbReference type="InterPro" id="IPR003620">
    <property type="entry name" value="Urocortin_CRF"/>
</dbReference>
<dbReference type="PANTHER" id="PTHR15035">
    <property type="entry name" value="CORTICOLIBERIN/UROCORTIN"/>
    <property type="match status" value="1"/>
</dbReference>
<dbReference type="PANTHER" id="PTHR15035:SF11">
    <property type="entry name" value="UROCORTIN"/>
    <property type="match status" value="1"/>
</dbReference>
<dbReference type="Pfam" id="PF00473">
    <property type="entry name" value="CRF"/>
    <property type="match status" value="1"/>
</dbReference>
<dbReference type="PRINTS" id="PR01612">
    <property type="entry name" value="CRFFAMILY"/>
</dbReference>
<dbReference type="SMART" id="SM00039">
    <property type="entry name" value="CRF"/>
    <property type="match status" value="1"/>
</dbReference>
<dbReference type="PROSITE" id="PS00511">
    <property type="entry name" value="CRF"/>
    <property type="match status" value="1"/>
</dbReference>
<name>UCN1_MOUSE</name>